<keyword id="KW-0496">Mitochondrion</keyword>
<keyword id="KW-1185">Reference proteome</keyword>
<keyword id="KW-0694">RNA-binding</keyword>
<keyword id="KW-0808">Transferase</keyword>
<keyword id="KW-0809">Transit peptide</keyword>
<gene>
    <name evidence="4" type="primary">lcsQ</name>
    <name type="ORF">VFPBJ_11787</name>
    <name type="ORF">VFPFJ_08910</name>
</gene>
<evidence type="ECO:0000255" key="1"/>
<evidence type="ECO:0000256" key="2">
    <source>
        <dbReference type="SAM" id="MobiDB-lite"/>
    </source>
</evidence>
<evidence type="ECO:0000269" key="3">
    <source>
    </source>
</evidence>
<evidence type="ECO:0000303" key="4">
    <source>
    </source>
</evidence>
<evidence type="ECO:0000305" key="5"/>
<evidence type="ECO:0000305" key="6">
    <source>
    </source>
</evidence>
<organism>
    <name type="scientific">Purpureocillium lilacinum</name>
    <name type="common">Paecilomyces lilacinus</name>
    <dbReference type="NCBI Taxonomy" id="33203"/>
    <lineage>
        <taxon>Eukaryota</taxon>
        <taxon>Fungi</taxon>
        <taxon>Dikarya</taxon>
        <taxon>Ascomycota</taxon>
        <taxon>Pezizomycotina</taxon>
        <taxon>Sordariomycetes</taxon>
        <taxon>Hypocreomycetidae</taxon>
        <taxon>Hypocreales</taxon>
        <taxon>Ophiocordycipitaceae</taxon>
        <taxon>Purpureocillium</taxon>
    </lineage>
</organism>
<protein>
    <recommendedName>
        <fullName evidence="4">Nucleotidyltransferase lcsQ</fullName>
        <ecNumber evidence="6">2.7.7.-</ecNumber>
    </recommendedName>
    <alternativeName>
        <fullName evidence="4">Leucinostatins biosynthesis cluster protein Q</fullName>
    </alternativeName>
</protein>
<dbReference type="EC" id="2.7.7.-" evidence="6"/>
<dbReference type="EMBL" id="LSBH01000009">
    <property type="protein sequence ID" value="OAQ74993.1"/>
    <property type="molecule type" value="Genomic_DNA"/>
</dbReference>
<dbReference type="EMBL" id="LSBI01000008">
    <property type="protein sequence ID" value="OAQ83107.1"/>
    <property type="molecule type" value="Genomic_DNA"/>
</dbReference>
<dbReference type="RefSeq" id="XP_018175735.1">
    <property type="nucleotide sequence ID" value="XM_018325983.1"/>
</dbReference>
<dbReference type="STRING" id="33203.A0A179GC70"/>
<dbReference type="OMA" id="WQKFLDH"/>
<dbReference type="Proteomes" id="UP000078240">
    <property type="component" value="Unassembled WGS sequence"/>
</dbReference>
<dbReference type="Proteomes" id="UP000078340">
    <property type="component" value="Unassembled WGS sequence"/>
</dbReference>
<dbReference type="GO" id="GO:0005739">
    <property type="term" value="C:mitochondrion"/>
    <property type="evidence" value="ECO:0007669"/>
    <property type="project" value="UniProtKB-SubCell"/>
</dbReference>
<dbReference type="GO" id="GO:0052929">
    <property type="term" value="F:ATP:3'-cytidine-cytidine-tRNA adenylyltransferase activity"/>
    <property type="evidence" value="ECO:0007669"/>
    <property type="project" value="TreeGrafter"/>
</dbReference>
<dbReference type="GO" id="GO:0052927">
    <property type="term" value="F:CC tRNA cytidylyltransferase activity"/>
    <property type="evidence" value="ECO:0007669"/>
    <property type="project" value="TreeGrafter"/>
</dbReference>
<dbReference type="GO" id="GO:0003723">
    <property type="term" value="F:RNA binding"/>
    <property type="evidence" value="ECO:0007669"/>
    <property type="project" value="UniProtKB-KW"/>
</dbReference>
<dbReference type="GO" id="GO:0001680">
    <property type="term" value="P:tRNA 3'-terminal CCA addition"/>
    <property type="evidence" value="ECO:0007669"/>
    <property type="project" value="TreeGrafter"/>
</dbReference>
<dbReference type="CDD" id="cd05398">
    <property type="entry name" value="NT_ClassII-CCAase"/>
    <property type="match status" value="1"/>
</dbReference>
<dbReference type="FunFam" id="3.30.460.10:FF:000019">
    <property type="entry name" value="tRNA nucleotidyltransferase cca2"/>
    <property type="match status" value="1"/>
</dbReference>
<dbReference type="Gene3D" id="3.30.460.10">
    <property type="entry name" value="Beta Polymerase, domain 2"/>
    <property type="match status" value="1"/>
</dbReference>
<dbReference type="Gene3D" id="1.10.3090.10">
    <property type="entry name" value="cca-adding enzyme, domain 2"/>
    <property type="match status" value="1"/>
</dbReference>
<dbReference type="InterPro" id="IPR043519">
    <property type="entry name" value="NT_sf"/>
</dbReference>
<dbReference type="InterPro" id="IPR002646">
    <property type="entry name" value="PolA_pol_head_dom"/>
</dbReference>
<dbReference type="PANTHER" id="PTHR13734:SF5">
    <property type="entry name" value="CCA TRNA NUCLEOTIDYLTRANSFERASE, MITOCHONDRIAL"/>
    <property type="match status" value="1"/>
</dbReference>
<dbReference type="PANTHER" id="PTHR13734">
    <property type="entry name" value="TRNA-NUCLEOTIDYLTRANSFERASE"/>
    <property type="match status" value="1"/>
</dbReference>
<dbReference type="Pfam" id="PF01743">
    <property type="entry name" value="PolyA_pol"/>
    <property type="match status" value="1"/>
</dbReference>
<dbReference type="SUPFAM" id="SSF81301">
    <property type="entry name" value="Nucleotidyltransferase"/>
    <property type="match status" value="1"/>
</dbReference>
<dbReference type="SUPFAM" id="SSF81891">
    <property type="entry name" value="Poly A polymerase C-terminal region-like"/>
    <property type="match status" value="1"/>
</dbReference>
<reference key="1">
    <citation type="journal article" date="2016" name="PLoS Pathog.">
        <title>Biosynthesis of antibiotic leucinostatins in bio-control fungus Purpureocillium lilacinum and their inhibition on phytophthora revealed by genome mining.</title>
        <authorList>
            <person name="Wang G."/>
            <person name="Liu Z."/>
            <person name="Lin R."/>
            <person name="Li E."/>
            <person name="Mao Z."/>
            <person name="Ling J."/>
            <person name="Yang Y."/>
            <person name="Yin W.B."/>
            <person name="Xie B."/>
        </authorList>
    </citation>
    <scope>NUCLEOTIDE SEQUENCE [LARGE SCALE GENOMIC DNA]</scope>
    <scope>IDENTIFICATION</scope>
    <scope>FUNCTION</scope>
    <scope>INDUCTION</scope>
    <source>
        <strain>PLBJ-1</strain>
    </source>
</reference>
<comment type="function">
    <text evidence="3 6">Nucleotidyltransferase; part of the gene cluster that mediates the biosynthesis of the lipopeptide antibiotics leucinostatins that show extensive biological activities, including antimalarial, antiviral, antibacterial, antifungal, and antitumor activities, as well as phytotoxic (PubMed:27416025). The function of lcsQ within the leucinostatins biosynthesis has not been identified yet (Probable).</text>
</comment>
<comment type="subcellular location">
    <subcellularLocation>
        <location evidence="1">Mitochondrion</location>
    </subcellularLocation>
</comment>
<comment type="induction">
    <text evidence="3">Expression is positively regulated by the leucinostatins biosynthesis cluster-specific transcription regulator lcsF.</text>
</comment>
<comment type="similarity">
    <text evidence="5">Belongs to the tRNA nucleotidyltransferase/poly(A) polymerase family.</text>
</comment>
<accession>A0A179GC70</accession>
<feature type="transit peptide" description="Mitochondrion" evidence="1">
    <location>
        <begin position="1"/>
        <end position="22"/>
    </location>
</feature>
<feature type="chain" id="PRO_0000446613" description="Nucleotidyltransferase lcsQ" evidence="1">
    <location>
        <begin position="23"/>
        <end position="596"/>
    </location>
</feature>
<feature type="region of interest" description="Disordered" evidence="2">
    <location>
        <begin position="475"/>
        <end position="504"/>
    </location>
</feature>
<proteinExistence type="evidence at transcript level"/>
<name>LCSQ_PURLI</name>
<sequence>MLLRLSPSRMALKRKLDSFLRNVHSQSAPPAAMAHARTVRLSAREEQLRALLLDVCRSIDAAGDVTQPIILRWAGGWVRDKLLGIESHDIDVAINAMTGVHFAQRMCDFCTLPDAIKRHGIGPRDVGNLHNVARNPDKSKHLETAMVKIFGLDLDFVNLRRETYADDSRNPAMEFGSAEEDALRRDATINALFFNLHTGCVEDFTGGLPDMAARMIRTPLDPLQTFTDDPLRVLRLVRFASRLQFYIDPATQRVMDHPTVLQALRVKISRERVGVELEKMLKGTCPPQVEVHFWAQPTRRALELLDELHLYHAIFTDPAREPTERPDLRRWHVAYECLGWLLGNRSPGSIGTLLAQSEEAVYVAWNLAAVSPWMPVEEPPGVKKKANALPPVAVIAREGFRAPNKLTDVMAASHRHRKEILQLKEAVCHGEPWTRQRDRCGMAIRRWDSQGGFWTLQVLSTLLVDAMEQVDSWPIVAHPGKPSQPADVPETPLSSGASKSKNLDPSIAKRDDFITGWQKFLDHVVELNVYNAPTMKRLLDGRALAQALGVKPGKWTGKALDVCMAWQLRNPDETDPSKAIEEVRMRRDELGIPLDG</sequence>